<gene>
    <name type="primary">svf2</name>
    <name type="ORF">SPBC36B7.02</name>
</gene>
<feature type="chain" id="PRO_0000374001" description="Survival factor 2">
    <location>
        <begin position="1"/>
        <end position="353"/>
    </location>
</feature>
<reference key="1">
    <citation type="journal article" date="2002" name="Nature">
        <title>The genome sequence of Schizosaccharomyces pombe.</title>
        <authorList>
            <person name="Wood V."/>
            <person name="Gwilliam R."/>
            <person name="Rajandream M.A."/>
            <person name="Lyne M.H."/>
            <person name="Lyne R."/>
            <person name="Stewart A."/>
            <person name="Sgouros J.G."/>
            <person name="Peat N."/>
            <person name="Hayles J."/>
            <person name="Baker S.G."/>
            <person name="Basham D."/>
            <person name="Bowman S."/>
            <person name="Brooks K."/>
            <person name="Brown D."/>
            <person name="Brown S."/>
            <person name="Chillingworth T."/>
            <person name="Churcher C.M."/>
            <person name="Collins M."/>
            <person name="Connor R."/>
            <person name="Cronin A."/>
            <person name="Davis P."/>
            <person name="Feltwell T."/>
            <person name="Fraser A."/>
            <person name="Gentles S."/>
            <person name="Goble A."/>
            <person name="Hamlin N."/>
            <person name="Harris D.E."/>
            <person name="Hidalgo J."/>
            <person name="Hodgson G."/>
            <person name="Holroyd S."/>
            <person name="Hornsby T."/>
            <person name="Howarth S."/>
            <person name="Huckle E.J."/>
            <person name="Hunt S."/>
            <person name="Jagels K."/>
            <person name="James K.D."/>
            <person name="Jones L."/>
            <person name="Jones M."/>
            <person name="Leather S."/>
            <person name="McDonald S."/>
            <person name="McLean J."/>
            <person name="Mooney P."/>
            <person name="Moule S."/>
            <person name="Mungall K.L."/>
            <person name="Murphy L.D."/>
            <person name="Niblett D."/>
            <person name="Odell C."/>
            <person name="Oliver K."/>
            <person name="O'Neil S."/>
            <person name="Pearson D."/>
            <person name="Quail M.A."/>
            <person name="Rabbinowitsch E."/>
            <person name="Rutherford K.M."/>
            <person name="Rutter S."/>
            <person name="Saunders D."/>
            <person name="Seeger K."/>
            <person name="Sharp S."/>
            <person name="Skelton J."/>
            <person name="Simmonds M.N."/>
            <person name="Squares R."/>
            <person name="Squares S."/>
            <person name="Stevens K."/>
            <person name="Taylor K."/>
            <person name="Taylor R.G."/>
            <person name="Tivey A."/>
            <person name="Walsh S.V."/>
            <person name="Warren T."/>
            <person name="Whitehead S."/>
            <person name="Woodward J.R."/>
            <person name="Volckaert G."/>
            <person name="Aert R."/>
            <person name="Robben J."/>
            <person name="Grymonprez B."/>
            <person name="Weltjens I."/>
            <person name="Vanstreels E."/>
            <person name="Rieger M."/>
            <person name="Schaefer M."/>
            <person name="Mueller-Auer S."/>
            <person name="Gabel C."/>
            <person name="Fuchs M."/>
            <person name="Duesterhoeft A."/>
            <person name="Fritzc C."/>
            <person name="Holzer E."/>
            <person name="Moestl D."/>
            <person name="Hilbert H."/>
            <person name="Borzym K."/>
            <person name="Langer I."/>
            <person name="Beck A."/>
            <person name="Lehrach H."/>
            <person name="Reinhardt R."/>
            <person name="Pohl T.M."/>
            <person name="Eger P."/>
            <person name="Zimmermann W."/>
            <person name="Wedler H."/>
            <person name="Wambutt R."/>
            <person name="Purnelle B."/>
            <person name="Goffeau A."/>
            <person name="Cadieu E."/>
            <person name="Dreano S."/>
            <person name="Gloux S."/>
            <person name="Lelaure V."/>
            <person name="Mottier S."/>
            <person name="Galibert F."/>
            <person name="Aves S.J."/>
            <person name="Xiang Z."/>
            <person name="Hunt C."/>
            <person name="Moore K."/>
            <person name="Hurst S.M."/>
            <person name="Lucas M."/>
            <person name="Rochet M."/>
            <person name="Gaillardin C."/>
            <person name="Tallada V.A."/>
            <person name="Garzon A."/>
            <person name="Thode G."/>
            <person name="Daga R.R."/>
            <person name="Cruzado L."/>
            <person name="Jimenez J."/>
            <person name="Sanchez M."/>
            <person name="del Rey F."/>
            <person name="Benito J."/>
            <person name="Dominguez A."/>
            <person name="Revuelta J.L."/>
            <person name="Moreno S."/>
            <person name="Armstrong J."/>
            <person name="Forsburg S.L."/>
            <person name="Cerutti L."/>
            <person name="Lowe T."/>
            <person name="McCombie W.R."/>
            <person name="Paulsen I."/>
            <person name="Potashkin J."/>
            <person name="Shpakovski G.V."/>
            <person name="Ussery D."/>
            <person name="Barrell B.G."/>
            <person name="Nurse P."/>
        </authorList>
    </citation>
    <scope>NUCLEOTIDE SEQUENCE [LARGE SCALE GENOMIC DNA]</scope>
    <source>
        <strain>972 / ATCC 24843</strain>
    </source>
</reference>
<reference key="2">
    <citation type="journal article" date="2006" name="Nat. Biotechnol.">
        <title>ORFeome cloning and global analysis of protein localization in the fission yeast Schizosaccharomyces pombe.</title>
        <authorList>
            <person name="Matsuyama A."/>
            <person name="Arai R."/>
            <person name="Yashiroda Y."/>
            <person name="Shirai A."/>
            <person name="Kamata A."/>
            <person name="Sekido S."/>
            <person name="Kobayashi Y."/>
            <person name="Hashimoto A."/>
            <person name="Hamamoto M."/>
            <person name="Hiraoka Y."/>
            <person name="Horinouchi S."/>
            <person name="Yoshida M."/>
        </authorList>
    </citation>
    <scope>SUBCELLULAR LOCATION [LARGE SCALE ANALYSIS]</scope>
</reference>
<accession>Q9HGN8</accession>
<sequence>MSSSYSSRAEKYDLISCKDLTWDLSRSHLTTQYKSFYMCFDDGSFGYLQIAYGNLGLLVKVTPLGWTYYPAKTEKNVEPIVNSSTYLYRSMKISKDRYSVDVQKHFMHFNSSTREWHIVIEGVYDLKIKTEDSGFSLVDFGQNDSSSRMEHKIFPINTVEGTVTAHGREKKLTGVAVYVGALFFREKFTNLGHTWQNSILFDKSKKSILTCLHYFPRDPSQPFRSQASLTLDGKLIAVLLDNEYSTKGAAQVDGIRYLLPEQIHRILSGQTFDGKPVRVELSAELEELDSITDVLKIFPKWAKDIVSIWAGLPFVFVWLQHITAEVFIDNEHVATLSGCYYLEQTCVHLPQTC</sequence>
<dbReference type="EMBL" id="CU329671">
    <property type="protein sequence ID" value="CAC05723.1"/>
    <property type="molecule type" value="Genomic_DNA"/>
</dbReference>
<dbReference type="RefSeq" id="NP_595984.1">
    <property type="nucleotide sequence ID" value="NM_001021891.2"/>
</dbReference>
<dbReference type="BioGRID" id="277459">
    <property type="interactions" value="7"/>
</dbReference>
<dbReference type="PaxDb" id="4896-SPBC36B7.02.1"/>
<dbReference type="EnsemblFungi" id="SPBC36B7.02.1">
    <property type="protein sequence ID" value="SPBC36B7.02.1:pep"/>
    <property type="gene ID" value="SPBC36B7.02"/>
</dbReference>
<dbReference type="GeneID" id="2540943"/>
<dbReference type="KEGG" id="spo:2540943"/>
<dbReference type="PomBase" id="SPBC36B7.02">
    <property type="gene designation" value="svf2"/>
</dbReference>
<dbReference type="VEuPathDB" id="FungiDB:SPBC36B7.02"/>
<dbReference type="HOGENOM" id="CLU_787920_0_0_1"/>
<dbReference type="InParanoid" id="Q9HGN8"/>
<dbReference type="OMA" id="FPKWAKD"/>
<dbReference type="PhylomeDB" id="Q9HGN8"/>
<dbReference type="PRO" id="PR:Q9HGN8"/>
<dbReference type="Proteomes" id="UP000002485">
    <property type="component" value="Chromosome II"/>
</dbReference>
<dbReference type="GO" id="GO:0005737">
    <property type="term" value="C:cytoplasm"/>
    <property type="evidence" value="ECO:0000318"/>
    <property type="project" value="GO_Central"/>
</dbReference>
<dbReference type="GO" id="GO:0005829">
    <property type="term" value="C:cytosol"/>
    <property type="evidence" value="ECO:0007005"/>
    <property type="project" value="PomBase"/>
</dbReference>
<dbReference type="GO" id="GO:0016020">
    <property type="term" value="C:membrane"/>
    <property type="evidence" value="ECO:0007669"/>
    <property type="project" value="GOC"/>
</dbReference>
<dbReference type="GO" id="GO:0005634">
    <property type="term" value="C:nucleus"/>
    <property type="evidence" value="ECO:0007005"/>
    <property type="project" value="PomBase"/>
</dbReference>
<dbReference type="GO" id="GO:0035621">
    <property type="term" value="P:ER to Golgi ceramide transport"/>
    <property type="evidence" value="ECO:0000250"/>
    <property type="project" value="PomBase"/>
</dbReference>
<dbReference type="GO" id="GO:0006979">
    <property type="term" value="P:response to oxidative stress"/>
    <property type="evidence" value="ECO:0007669"/>
    <property type="project" value="InterPro"/>
</dbReference>
<dbReference type="GO" id="GO:0030148">
    <property type="term" value="P:sphingolipid biosynthetic process"/>
    <property type="evidence" value="ECO:0000266"/>
    <property type="project" value="PomBase"/>
</dbReference>
<dbReference type="InterPro" id="IPR051385">
    <property type="entry name" value="Ceramide-binding_SVF1"/>
</dbReference>
<dbReference type="InterPro" id="IPR033394">
    <property type="entry name" value="Svf1-like_C"/>
</dbReference>
<dbReference type="InterPro" id="IPR013931">
    <property type="entry name" value="Svf1-like_N"/>
</dbReference>
<dbReference type="PANTHER" id="PTHR47107:SF2">
    <property type="entry name" value="SURVIVAL FACTOR 2"/>
    <property type="match status" value="1"/>
</dbReference>
<dbReference type="PANTHER" id="PTHR47107">
    <property type="entry name" value="SVF1-LIKE PROTEIN YDR222W-RELATED"/>
    <property type="match status" value="1"/>
</dbReference>
<dbReference type="Pfam" id="PF08622">
    <property type="entry name" value="Svf1"/>
    <property type="match status" value="1"/>
</dbReference>
<dbReference type="Pfam" id="PF17187">
    <property type="entry name" value="Svf1_C"/>
    <property type="match status" value="1"/>
</dbReference>
<organism>
    <name type="scientific">Schizosaccharomyces pombe (strain 972 / ATCC 24843)</name>
    <name type="common">Fission yeast</name>
    <dbReference type="NCBI Taxonomy" id="284812"/>
    <lineage>
        <taxon>Eukaryota</taxon>
        <taxon>Fungi</taxon>
        <taxon>Dikarya</taxon>
        <taxon>Ascomycota</taxon>
        <taxon>Taphrinomycotina</taxon>
        <taxon>Schizosaccharomycetes</taxon>
        <taxon>Schizosaccharomycetales</taxon>
        <taxon>Schizosaccharomycetaceae</taxon>
        <taxon>Schizosaccharomyces</taxon>
    </lineage>
</organism>
<proteinExistence type="inferred from homology"/>
<evidence type="ECO:0000269" key="1">
    <source>
    </source>
</evidence>
<evidence type="ECO:0000305" key="2"/>
<protein>
    <recommendedName>
        <fullName>Survival factor 2</fullName>
    </recommendedName>
</protein>
<comment type="subcellular location">
    <subcellularLocation>
        <location evidence="1">Cytoplasm</location>
    </subcellularLocation>
    <subcellularLocation>
        <location evidence="1">Nucleus</location>
    </subcellularLocation>
</comment>
<comment type="similarity">
    <text evidence="2">Belongs to the SVF1 family.</text>
</comment>
<name>SVF2_SCHPO</name>
<keyword id="KW-0963">Cytoplasm</keyword>
<keyword id="KW-0539">Nucleus</keyword>
<keyword id="KW-1185">Reference proteome</keyword>